<reference key="1">
    <citation type="journal article" date="2008" name="Proc. Natl. Acad. Sci. U.S.A.">
        <title>Niche adaptation and genome expansion in the chlorophyll d-producing cyanobacterium Acaryochloris marina.</title>
        <authorList>
            <person name="Swingley W.D."/>
            <person name="Chen M."/>
            <person name="Cheung P.C."/>
            <person name="Conrad A.L."/>
            <person name="Dejesa L.C."/>
            <person name="Hao J."/>
            <person name="Honchak B.M."/>
            <person name="Karbach L.E."/>
            <person name="Kurdoglu A."/>
            <person name="Lahiri S."/>
            <person name="Mastrian S.D."/>
            <person name="Miyashita H."/>
            <person name="Page L."/>
            <person name="Ramakrishna P."/>
            <person name="Satoh S."/>
            <person name="Sattley W.M."/>
            <person name="Shimada Y."/>
            <person name="Taylor H.L."/>
            <person name="Tomo T."/>
            <person name="Tsuchiya T."/>
            <person name="Wang Z.T."/>
            <person name="Raymond J."/>
            <person name="Mimuro M."/>
            <person name="Blankenship R.E."/>
            <person name="Touchman J.W."/>
        </authorList>
    </citation>
    <scope>NUCLEOTIDE SEQUENCE [LARGE SCALE GENOMIC DNA]</scope>
    <source>
        <strain>MBIC 11017</strain>
    </source>
</reference>
<sequence>MFALSGYEYLLGFLLLCSLVPALALSASKVLRPSNQGAVRRTTYESGMEPVGGAWIQFNIRYYMFALVFVIFDVETVFLYPWAVAFHKLGVLAFIEALIFIAILIVGLVYAWRKGALEWS</sequence>
<accession>B0C6C4</accession>
<protein>
    <recommendedName>
        <fullName evidence="1">NAD(P)H-quinone oxidoreductase subunit 3</fullName>
        <ecNumber evidence="1">7.1.1.-</ecNumber>
    </recommendedName>
    <alternativeName>
        <fullName evidence="1">NAD(P)H dehydrogenase subunit 3</fullName>
    </alternativeName>
    <alternativeName>
        <fullName evidence="1">NADH-plastoquinone oxidoreductase subunit 3</fullName>
    </alternativeName>
    <alternativeName>
        <fullName evidence="1">NDH-1 subunit 3</fullName>
        <shortName evidence="1">NDH-C</shortName>
    </alternativeName>
</protein>
<organism>
    <name type="scientific">Acaryochloris marina (strain MBIC 11017)</name>
    <dbReference type="NCBI Taxonomy" id="329726"/>
    <lineage>
        <taxon>Bacteria</taxon>
        <taxon>Bacillati</taxon>
        <taxon>Cyanobacteriota</taxon>
        <taxon>Cyanophyceae</taxon>
        <taxon>Acaryochloridales</taxon>
        <taxon>Acaryochloridaceae</taxon>
        <taxon>Acaryochloris</taxon>
    </lineage>
</organism>
<proteinExistence type="inferred from homology"/>
<gene>
    <name evidence="1" type="primary">ndhC</name>
    <name type="ordered locus">AM1_0132</name>
</gene>
<name>NU3C_ACAM1</name>
<comment type="function">
    <text evidence="1">NDH-1 shuttles electrons from an unknown electron donor, via FMN and iron-sulfur (Fe-S) centers, to quinones in the respiratory and/or the photosynthetic chain. The immediate electron acceptor for the enzyme in this species is believed to be plastoquinone. Couples the redox reaction to proton translocation, and thus conserves the redox energy in a proton gradient. Cyanobacterial NDH-1 also plays a role in inorganic carbon-concentration.</text>
</comment>
<comment type="catalytic activity">
    <reaction evidence="1">
        <text>a plastoquinone + NADH + (n+1) H(+)(in) = a plastoquinol + NAD(+) + n H(+)(out)</text>
        <dbReference type="Rhea" id="RHEA:42608"/>
        <dbReference type="Rhea" id="RHEA-COMP:9561"/>
        <dbReference type="Rhea" id="RHEA-COMP:9562"/>
        <dbReference type="ChEBI" id="CHEBI:15378"/>
        <dbReference type="ChEBI" id="CHEBI:17757"/>
        <dbReference type="ChEBI" id="CHEBI:57540"/>
        <dbReference type="ChEBI" id="CHEBI:57945"/>
        <dbReference type="ChEBI" id="CHEBI:62192"/>
    </reaction>
</comment>
<comment type="catalytic activity">
    <reaction evidence="1">
        <text>a plastoquinone + NADPH + (n+1) H(+)(in) = a plastoquinol + NADP(+) + n H(+)(out)</text>
        <dbReference type="Rhea" id="RHEA:42612"/>
        <dbReference type="Rhea" id="RHEA-COMP:9561"/>
        <dbReference type="Rhea" id="RHEA-COMP:9562"/>
        <dbReference type="ChEBI" id="CHEBI:15378"/>
        <dbReference type="ChEBI" id="CHEBI:17757"/>
        <dbReference type="ChEBI" id="CHEBI:57783"/>
        <dbReference type="ChEBI" id="CHEBI:58349"/>
        <dbReference type="ChEBI" id="CHEBI:62192"/>
    </reaction>
</comment>
<comment type="subunit">
    <text evidence="1">NDH-1 can be composed of about 15 different subunits; different subcomplexes with different compositions have been identified which probably have different functions.</text>
</comment>
<comment type="subcellular location">
    <subcellularLocation>
        <location evidence="1">Cellular thylakoid membrane</location>
        <topology evidence="1">Multi-pass membrane protein</topology>
    </subcellularLocation>
</comment>
<comment type="similarity">
    <text evidence="1">Belongs to the complex I subunit 3 family.</text>
</comment>
<keyword id="KW-0472">Membrane</keyword>
<keyword id="KW-0520">NAD</keyword>
<keyword id="KW-0521">NADP</keyword>
<keyword id="KW-0618">Plastoquinone</keyword>
<keyword id="KW-0874">Quinone</keyword>
<keyword id="KW-1185">Reference proteome</keyword>
<keyword id="KW-0793">Thylakoid</keyword>
<keyword id="KW-1278">Translocase</keyword>
<keyword id="KW-0812">Transmembrane</keyword>
<keyword id="KW-1133">Transmembrane helix</keyword>
<keyword id="KW-0813">Transport</keyword>
<evidence type="ECO:0000255" key="1">
    <source>
        <dbReference type="HAMAP-Rule" id="MF_01394"/>
    </source>
</evidence>
<feature type="chain" id="PRO_0000362608" description="NAD(P)H-quinone oxidoreductase subunit 3">
    <location>
        <begin position="1"/>
        <end position="120"/>
    </location>
</feature>
<feature type="transmembrane region" description="Helical" evidence="1">
    <location>
        <begin position="10"/>
        <end position="32"/>
    </location>
</feature>
<feature type="transmembrane region" description="Helical" evidence="1">
    <location>
        <begin position="64"/>
        <end position="84"/>
    </location>
</feature>
<feature type="transmembrane region" description="Helical" evidence="1">
    <location>
        <begin position="89"/>
        <end position="109"/>
    </location>
</feature>
<dbReference type="EC" id="7.1.1.-" evidence="1"/>
<dbReference type="EMBL" id="CP000828">
    <property type="protein sequence ID" value="ABW25218.1"/>
    <property type="molecule type" value="Genomic_DNA"/>
</dbReference>
<dbReference type="RefSeq" id="WP_010469000.1">
    <property type="nucleotide sequence ID" value="NC_009925.1"/>
</dbReference>
<dbReference type="SMR" id="B0C6C4"/>
<dbReference type="STRING" id="329726.AM1_0132"/>
<dbReference type="KEGG" id="amr:AM1_0132"/>
<dbReference type="eggNOG" id="COG0838">
    <property type="taxonomic scope" value="Bacteria"/>
</dbReference>
<dbReference type="HOGENOM" id="CLU_119549_1_1_3"/>
<dbReference type="OrthoDB" id="9791970at2"/>
<dbReference type="Proteomes" id="UP000000268">
    <property type="component" value="Chromosome"/>
</dbReference>
<dbReference type="GO" id="GO:0030964">
    <property type="term" value="C:NADH dehydrogenase complex"/>
    <property type="evidence" value="ECO:0007669"/>
    <property type="project" value="TreeGrafter"/>
</dbReference>
<dbReference type="GO" id="GO:0031676">
    <property type="term" value="C:plasma membrane-derived thylakoid membrane"/>
    <property type="evidence" value="ECO:0007669"/>
    <property type="project" value="UniProtKB-SubCell"/>
</dbReference>
<dbReference type="GO" id="GO:0008137">
    <property type="term" value="F:NADH dehydrogenase (ubiquinone) activity"/>
    <property type="evidence" value="ECO:0007669"/>
    <property type="project" value="InterPro"/>
</dbReference>
<dbReference type="GO" id="GO:0048038">
    <property type="term" value="F:quinone binding"/>
    <property type="evidence" value="ECO:0007669"/>
    <property type="project" value="UniProtKB-KW"/>
</dbReference>
<dbReference type="GO" id="GO:0019684">
    <property type="term" value="P:photosynthesis, light reaction"/>
    <property type="evidence" value="ECO:0007669"/>
    <property type="project" value="UniProtKB-UniRule"/>
</dbReference>
<dbReference type="FunFam" id="1.20.58.1610:FF:000001">
    <property type="entry name" value="NAD(P)H-quinone oxidoreductase subunit 3, chloroplastic"/>
    <property type="match status" value="1"/>
</dbReference>
<dbReference type="Gene3D" id="1.20.58.1610">
    <property type="entry name" value="NADH:ubiquinone/plastoquinone oxidoreductase, chain 3"/>
    <property type="match status" value="1"/>
</dbReference>
<dbReference type="HAMAP" id="MF_01394">
    <property type="entry name" value="NDH1_NuoA"/>
    <property type="match status" value="1"/>
</dbReference>
<dbReference type="InterPro" id="IPR023043">
    <property type="entry name" value="NAD(P)H_OxRDtase_bac/plastid"/>
</dbReference>
<dbReference type="InterPro" id="IPR000440">
    <property type="entry name" value="NADH_UbQ/plastoQ_OxRdtase_su3"/>
</dbReference>
<dbReference type="InterPro" id="IPR038430">
    <property type="entry name" value="NDAH_ubi_oxred_su3_sf"/>
</dbReference>
<dbReference type="PANTHER" id="PTHR11058">
    <property type="entry name" value="NADH-UBIQUINONE OXIDOREDUCTASE CHAIN 3"/>
    <property type="match status" value="1"/>
</dbReference>
<dbReference type="PANTHER" id="PTHR11058:SF9">
    <property type="entry name" value="NADH-UBIQUINONE OXIDOREDUCTASE CHAIN 3"/>
    <property type="match status" value="1"/>
</dbReference>
<dbReference type="Pfam" id="PF00507">
    <property type="entry name" value="Oxidored_q4"/>
    <property type="match status" value="1"/>
</dbReference>